<sequence length="47" mass="5592">MKRTYQPNVRKRAKTHGFRARMKTKAGRNVLARRRAKGRHRLTVSDE</sequence>
<feature type="chain" id="PRO_1000013330" description="Large ribosomal subunit protein bL34">
    <location>
        <begin position="1"/>
        <end position="47"/>
    </location>
</feature>
<feature type="region of interest" description="Disordered" evidence="2">
    <location>
        <begin position="22"/>
        <end position="47"/>
    </location>
</feature>
<reference key="1">
    <citation type="submission" date="2006-04" db="EMBL/GenBank/DDBJ databases">
        <title>Complete sequence of chromosome of Deinococcus geothermalis DSM 11300.</title>
        <authorList>
            <person name="Copeland A."/>
            <person name="Lucas S."/>
            <person name="Lapidus A."/>
            <person name="Barry K."/>
            <person name="Detter J.C."/>
            <person name="Glavina del Rio T."/>
            <person name="Hammon N."/>
            <person name="Israni S."/>
            <person name="Dalin E."/>
            <person name="Tice H."/>
            <person name="Pitluck S."/>
            <person name="Brettin T."/>
            <person name="Bruce D."/>
            <person name="Han C."/>
            <person name="Tapia R."/>
            <person name="Saunders E."/>
            <person name="Gilna P."/>
            <person name="Schmutz J."/>
            <person name="Larimer F."/>
            <person name="Land M."/>
            <person name="Hauser L."/>
            <person name="Kyrpides N."/>
            <person name="Kim E."/>
            <person name="Daly M.J."/>
            <person name="Fredrickson J.K."/>
            <person name="Makarova K.S."/>
            <person name="Gaidamakova E.K."/>
            <person name="Zhai M."/>
            <person name="Richardson P."/>
        </authorList>
    </citation>
    <scope>NUCLEOTIDE SEQUENCE [LARGE SCALE GENOMIC DNA]</scope>
    <source>
        <strain>DSM 11300 / CIP 105573 / AG-3a</strain>
    </source>
</reference>
<dbReference type="EMBL" id="CP000359">
    <property type="protein sequence ID" value="ABF45863.1"/>
    <property type="molecule type" value="Genomic_DNA"/>
</dbReference>
<dbReference type="RefSeq" id="WP_011530697.1">
    <property type="nucleotide sequence ID" value="NC_008025.1"/>
</dbReference>
<dbReference type="SMR" id="Q1IY21"/>
<dbReference type="STRING" id="319795.Dgeo_1568"/>
<dbReference type="KEGG" id="dge:Dgeo_1568"/>
<dbReference type="eggNOG" id="COG0230">
    <property type="taxonomic scope" value="Bacteria"/>
</dbReference>
<dbReference type="HOGENOM" id="CLU_129938_2_0_0"/>
<dbReference type="Proteomes" id="UP000002431">
    <property type="component" value="Chromosome"/>
</dbReference>
<dbReference type="GO" id="GO:1990904">
    <property type="term" value="C:ribonucleoprotein complex"/>
    <property type="evidence" value="ECO:0007669"/>
    <property type="project" value="UniProtKB-KW"/>
</dbReference>
<dbReference type="GO" id="GO:0005840">
    <property type="term" value="C:ribosome"/>
    <property type="evidence" value="ECO:0007669"/>
    <property type="project" value="UniProtKB-KW"/>
</dbReference>
<dbReference type="GO" id="GO:0003735">
    <property type="term" value="F:structural constituent of ribosome"/>
    <property type="evidence" value="ECO:0007669"/>
    <property type="project" value="InterPro"/>
</dbReference>
<dbReference type="GO" id="GO:0006412">
    <property type="term" value="P:translation"/>
    <property type="evidence" value="ECO:0007669"/>
    <property type="project" value="UniProtKB-UniRule"/>
</dbReference>
<dbReference type="FunFam" id="1.10.287.3980:FF:000001">
    <property type="entry name" value="Mitochondrial ribosomal protein L34"/>
    <property type="match status" value="1"/>
</dbReference>
<dbReference type="Gene3D" id="1.10.287.3980">
    <property type="match status" value="1"/>
</dbReference>
<dbReference type="HAMAP" id="MF_00391">
    <property type="entry name" value="Ribosomal_bL34"/>
    <property type="match status" value="1"/>
</dbReference>
<dbReference type="InterPro" id="IPR000271">
    <property type="entry name" value="Ribosomal_bL34"/>
</dbReference>
<dbReference type="InterPro" id="IPR020939">
    <property type="entry name" value="Ribosomal_bL34_CS"/>
</dbReference>
<dbReference type="NCBIfam" id="TIGR01030">
    <property type="entry name" value="rpmH_bact"/>
    <property type="match status" value="1"/>
</dbReference>
<dbReference type="PANTHER" id="PTHR14503:SF4">
    <property type="entry name" value="LARGE RIBOSOMAL SUBUNIT PROTEIN BL34M"/>
    <property type="match status" value="1"/>
</dbReference>
<dbReference type="PANTHER" id="PTHR14503">
    <property type="entry name" value="MITOCHONDRIAL RIBOSOMAL PROTEIN 34 FAMILY MEMBER"/>
    <property type="match status" value="1"/>
</dbReference>
<dbReference type="Pfam" id="PF00468">
    <property type="entry name" value="Ribosomal_L34"/>
    <property type="match status" value="1"/>
</dbReference>
<dbReference type="PROSITE" id="PS00784">
    <property type="entry name" value="RIBOSOMAL_L34"/>
    <property type="match status" value="1"/>
</dbReference>
<keyword id="KW-0687">Ribonucleoprotein</keyword>
<keyword id="KW-0689">Ribosomal protein</keyword>
<comment type="similarity">
    <text evidence="1">Belongs to the bacterial ribosomal protein bL34 family.</text>
</comment>
<proteinExistence type="inferred from homology"/>
<accession>Q1IY21</accession>
<gene>
    <name evidence="1" type="primary">rpmH</name>
    <name type="ordered locus">Dgeo_1568</name>
</gene>
<organism>
    <name type="scientific">Deinococcus geothermalis (strain DSM 11300 / CIP 105573 / AG-3a)</name>
    <dbReference type="NCBI Taxonomy" id="319795"/>
    <lineage>
        <taxon>Bacteria</taxon>
        <taxon>Thermotogati</taxon>
        <taxon>Deinococcota</taxon>
        <taxon>Deinococci</taxon>
        <taxon>Deinococcales</taxon>
        <taxon>Deinococcaceae</taxon>
        <taxon>Deinococcus</taxon>
    </lineage>
</organism>
<name>RL34_DEIGD</name>
<protein>
    <recommendedName>
        <fullName evidence="1">Large ribosomal subunit protein bL34</fullName>
    </recommendedName>
    <alternativeName>
        <fullName evidence="3">50S ribosomal protein L34</fullName>
    </alternativeName>
</protein>
<evidence type="ECO:0000255" key="1">
    <source>
        <dbReference type="HAMAP-Rule" id="MF_00391"/>
    </source>
</evidence>
<evidence type="ECO:0000256" key="2">
    <source>
        <dbReference type="SAM" id="MobiDB-lite"/>
    </source>
</evidence>
<evidence type="ECO:0000305" key="3"/>